<comment type="function">
    <text evidence="1">Catalyzes the formation of S-adenosylmethionine (AdoMet) from methionine and ATP. The overall synthetic reaction is composed of two sequential steps, AdoMet formation and the subsequent tripolyphosphate hydrolysis which occurs prior to release of AdoMet from the enzyme.</text>
</comment>
<comment type="catalytic activity">
    <reaction evidence="1">
        <text>L-methionine + ATP + H2O = S-adenosyl-L-methionine + phosphate + diphosphate</text>
        <dbReference type="Rhea" id="RHEA:21080"/>
        <dbReference type="ChEBI" id="CHEBI:15377"/>
        <dbReference type="ChEBI" id="CHEBI:30616"/>
        <dbReference type="ChEBI" id="CHEBI:33019"/>
        <dbReference type="ChEBI" id="CHEBI:43474"/>
        <dbReference type="ChEBI" id="CHEBI:57844"/>
        <dbReference type="ChEBI" id="CHEBI:59789"/>
        <dbReference type="EC" id="2.5.1.6"/>
    </reaction>
</comment>
<comment type="cofactor">
    <cofactor evidence="1">
        <name>Mg(2+)</name>
        <dbReference type="ChEBI" id="CHEBI:18420"/>
    </cofactor>
    <text evidence="1">Binds 2 divalent ions per subunit.</text>
</comment>
<comment type="cofactor">
    <cofactor evidence="1">
        <name>K(+)</name>
        <dbReference type="ChEBI" id="CHEBI:29103"/>
    </cofactor>
    <text evidence="1">Binds 1 potassium ion per subunit.</text>
</comment>
<comment type="pathway">
    <text evidence="1">Amino-acid biosynthesis; S-adenosyl-L-methionine biosynthesis; S-adenosyl-L-methionine from L-methionine: step 1/1.</text>
</comment>
<comment type="subunit">
    <text evidence="1">Homotetramer; dimer of dimers.</text>
</comment>
<comment type="subcellular location">
    <subcellularLocation>
        <location evidence="1">Cytoplasm</location>
    </subcellularLocation>
</comment>
<comment type="similarity">
    <text evidence="1">Belongs to the AdoMet synthase family.</text>
</comment>
<dbReference type="EC" id="2.5.1.6" evidence="1"/>
<dbReference type="EMBL" id="CP000301">
    <property type="protein sequence ID" value="ABD86740.1"/>
    <property type="molecule type" value="Genomic_DNA"/>
</dbReference>
<dbReference type="SMR" id="Q21A46"/>
<dbReference type="STRING" id="316056.RPC_1177"/>
<dbReference type="KEGG" id="rpc:RPC_1177"/>
<dbReference type="eggNOG" id="COG0192">
    <property type="taxonomic scope" value="Bacteria"/>
</dbReference>
<dbReference type="HOGENOM" id="CLU_041802_1_1_5"/>
<dbReference type="OrthoDB" id="9801686at2"/>
<dbReference type="UniPathway" id="UPA00315">
    <property type="reaction ID" value="UER00080"/>
</dbReference>
<dbReference type="GO" id="GO:0005737">
    <property type="term" value="C:cytoplasm"/>
    <property type="evidence" value="ECO:0007669"/>
    <property type="project" value="UniProtKB-SubCell"/>
</dbReference>
<dbReference type="GO" id="GO:0005524">
    <property type="term" value="F:ATP binding"/>
    <property type="evidence" value="ECO:0007669"/>
    <property type="project" value="UniProtKB-UniRule"/>
</dbReference>
<dbReference type="GO" id="GO:0000287">
    <property type="term" value="F:magnesium ion binding"/>
    <property type="evidence" value="ECO:0007669"/>
    <property type="project" value="UniProtKB-UniRule"/>
</dbReference>
<dbReference type="GO" id="GO:0004478">
    <property type="term" value="F:methionine adenosyltransferase activity"/>
    <property type="evidence" value="ECO:0007669"/>
    <property type="project" value="UniProtKB-UniRule"/>
</dbReference>
<dbReference type="GO" id="GO:0006730">
    <property type="term" value="P:one-carbon metabolic process"/>
    <property type="evidence" value="ECO:0007669"/>
    <property type="project" value="UniProtKB-KW"/>
</dbReference>
<dbReference type="GO" id="GO:0006556">
    <property type="term" value="P:S-adenosylmethionine biosynthetic process"/>
    <property type="evidence" value="ECO:0007669"/>
    <property type="project" value="UniProtKB-UniRule"/>
</dbReference>
<dbReference type="CDD" id="cd18079">
    <property type="entry name" value="S-AdoMet_synt"/>
    <property type="match status" value="1"/>
</dbReference>
<dbReference type="FunFam" id="3.30.300.10:FF:000003">
    <property type="entry name" value="S-adenosylmethionine synthase"/>
    <property type="match status" value="1"/>
</dbReference>
<dbReference type="Gene3D" id="3.30.300.10">
    <property type="match status" value="3"/>
</dbReference>
<dbReference type="HAMAP" id="MF_00086">
    <property type="entry name" value="S_AdoMet_synth1"/>
    <property type="match status" value="1"/>
</dbReference>
<dbReference type="InterPro" id="IPR022631">
    <property type="entry name" value="ADOMET_SYNTHASE_CS"/>
</dbReference>
<dbReference type="InterPro" id="IPR022630">
    <property type="entry name" value="S-AdoMet_synt_C"/>
</dbReference>
<dbReference type="InterPro" id="IPR022629">
    <property type="entry name" value="S-AdoMet_synt_central"/>
</dbReference>
<dbReference type="InterPro" id="IPR022628">
    <property type="entry name" value="S-AdoMet_synt_N"/>
</dbReference>
<dbReference type="InterPro" id="IPR002133">
    <property type="entry name" value="S-AdoMet_synthetase"/>
</dbReference>
<dbReference type="InterPro" id="IPR022636">
    <property type="entry name" value="S-AdoMet_synthetase_sfam"/>
</dbReference>
<dbReference type="NCBIfam" id="TIGR01034">
    <property type="entry name" value="metK"/>
    <property type="match status" value="1"/>
</dbReference>
<dbReference type="PANTHER" id="PTHR11964">
    <property type="entry name" value="S-ADENOSYLMETHIONINE SYNTHETASE"/>
    <property type="match status" value="1"/>
</dbReference>
<dbReference type="Pfam" id="PF02773">
    <property type="entry name" value="S-AdoMet_synt_C"/>
    <property type="match status" value="1"/>
</dbReference>
<dbReference type="Pfam" id="PF02772">
    <property type="entry name" value="S-AdoMet_synt_M"/>
    <property type="match status" value="1"/>
</dbReference>
<dbReference type="Pfam" id="PF00438">
    <property type="entry name" value="S-AdoMet_synt_N"/>
    <property type="match status" value="1"/>
</dbReference>
<dbReference type="PIRSF" id="PIRSF000497">
    <property type="entry name" value="MAT"/>
    <property type="match status" value="1"/>
</dbReference>
<dbReference type="SUPFAM" id="SSF55973">
    <property type="entry name" value="S-adenosylmethionine synthetase"/>
    <property type="match status" value="3"/>
</dbReference>
<dbReference type="PROSITE" id="PS00376">
    <property type="entry name" value="ADOMET_SYNTHASE_1"/>
    <property type="match status" value="1"/>
</dbReference>
<dbReference type="PROSITE" id="PS00377">
    <property type="entry name" value="ADOMET_SYNTHASE_2"/>
    <property type="match status" value="1"/>
</dbReference>
<protein>
    <recommendedName>
        <fullName evidence="1">S-adenosylmethionine synthase 1</fullName>
        <shortName evidence="1">AdoMet synthase 1</shortName>
        <ecNumber evidence="1">2.5.1.6</ecNumber>
    </recommendedName>
    <alternativeName>
        <fullName evidence="1">MAT 1</fullName>
    </alternativeName>
    <alternativeName>
        <fullName evidence="1">Methionine adenosyltransferase 1</fullName>
    </alternativeName>
</protein>
<feature type="chain" id="PRO_0000241027" description="S-adenosylmethionine synthase 1">
    <location>
        <begin position="1"/>
        <end position="383"/>
    </location>
</feature>
<feature type="region of interest" description="Flexible loop" evidence="1">
    <location>
        <begin position="99"/>
        <end position="109"/>
    </location>
</feature>
<feature type="binding site" description="in other chain" evidence="1">
    <location>
        <position position="15"/>
    </location>
    <ligand>
        <name>ATP</name>
        <dbReference type="ChEBI" id="CHEBI:30616"/>
        <note>ligand shared between two neighboring subunits</note>
    </ligand>
</feature>
<feature type="binding site" evidence="1">
    <location>
        <position position="17"/>
    </location>
    <ligand>
        <name>Mg(2+)</name>
        <dbReference type="ChEBI" id="CHEBI:18420"/>
    </ligand>
</feature>
<feature type="binding site" evidence="1">
    <location>
        <position position="43"/>
    </location>
    <ligand>
        <name>K(+)</name>
        <dbReference type="ChEBI" id="CHEBI:29103"/>
    </ligand>
</feature>
<feature type="binding site" description="in other chain" evidence="1">
    <location>
        <position position="56"/>
    </location>
    <ligand>
        <name>L-methionine</name>
        <dbReference type="ChEBI" id="CHEBI:57844"/>
        <note>ligand shared between two neighboring subunits</note>
    </ligand>
</feature>
<feature type="binding site" description="in other chain" evidence="1">
    <location>
        <position position="99"/>
    </location>
    <ligand>
        <name>L-methionine</name>
        <dbReference type="ChEBI" id="CHEBI:57844"/>
        <note>ligand shared between two neighboring subunits</note>
    </ligand>
</feature>
<feature type="binding site" description="in other chain" evidence="1">
    <location>
        <begin position="162"/>
        <end position="164"/>
    </location>
    <ligand>
        <name>ATP</name>
        <dbReference type="ChEBI" id="CHEBI:30616"/>
        <note>ligand shared between two neighboring subunits</note>
    </ligand>
</feature>
<feature type="binding site" description="in other chain" evidence="1">
    <location>
        <begin position="228"/>
        <end position="229"/>
    </location>
    <ligand>
        <name>ATP</name>
        <dbReference type="ChEBI" id="CHEBI:30616"/>
        <note>ligand shared between two neighboring subunits</note>
    </ligand>
</feature>
<feature type="binding site" evidence="1">
    <location>
        <position position="237"/>
    </location>
    <ligand>
        <name>ATP</name>
        <dbReference type="ChEBI" id="CHEBI:30616"/>
        <note>ligand shared between two neighboring subunits</note>
    </ligand>
</feature>
<feature type="binding site" evidence="1">
    <location>
        <position position="237"/>
    </location>
    <ligand>
        <name>L-methionine</name>
        <dbReference type="ChEBI" id="CHEBI:57844"/>
        <note>ligand shared between two neighboring subunits</note>
    </ligand>
</feature>
<feature type="binding site" description="in other chain" evidence="1">
    <location>
        <begin position="243"/>
        <end position="244"/>
    </location>
    <ligand>
        <name>ATP</name>
        <dbReference type="ChEBI" id="CHEBI:30616"/>
        <note>ligand shared between two neighboring subunits</note>
    </ligand>
</feature>
<feature type="binding site" evidence="1">
    <location>
        <position position="260"/>
    </location>
    <ligand>
        <name>ATP</name>
        <dbReference type="ChEBI" id="CHEBI:30616"/>
        <note>ligand shared between two neighboring subunits</note>
    </ligand>
</feature>
<feature type="binding site" evidence="1">
    <location>
        <position position="264"/>
    </location>
    <ligand>
        <name>ATP</name>
        <dbReference type="ChEBI" id="CHEBI:30616"/>
        <note>ligand shared between two neighboring subunits</note>
    </ligand>
</feature>
<feature type="binding site" description="in other chain" evidence="1">
    <location>
        <position position="268"/>
    </location>
    <ligand>
        <name>L-methionine</name>
        <dbReference type="ChEBI" id="CHEBI:57844"/>
        <note>ligand shared between two neighboring subunits</note>
    </ligand>
</feature>
<name>METK1_RHOPB</name>
<keyword id="KW-0067">ATP-binding</keyword>
<keyword id="KW-0963">Cytoplasm</keyword>
<keyword id="KW-0460">Magnesium</keyword>
<keyword id="KW-0479">Metal-binding</keyword>
<keyword id="KW-0547">Nucleotide-binding</keyword>
<keyword id="KW-0554">One-carbon metabolism</keyword>
<keyword id="KW-0630">Potassium</keyword>
<keyword id="KW-0808">Transferase</keyword>
<reference key="1">
    <citation type="submission" date="2006-03" db="EMBL/GenBank/DDBJ databases">
        <title>Complete sequence of Rhodopseudomonas palustris BisB18.</title>
        <authorList>
            <consortium name="US DOE Joint Genome Institute"/>
            <person name="Copeland A."/>
            <person name="Lucas S."/>
            <person name="Lapidus A."/>
            <person name="Barry K."/>
            <person name="Detter J.C."/>
            <person name="Glavina del Rio T."/>
            <person name="Hammon N."/>
            <person name="Israni S."/>
            <person name="Dalin E."/>
            <person name="Tice H."/>
            <person name="Pitluck S."/>
            <person name="Chain P."/>
            <person name="Malfatti S."/>
            <person name="Shin M."/>
            <person name="Vergez L."/>
            <person name="Schmutz J."/>
            <person name="Larimer F."/>
            <person name="Land M."/>
            <person name="Hauser L."/>
            <person name="Pelletier D.A."/>
            <person name="Kyrpides N."/>
            <person name="Anderson I."/>
            <person name="Oda Y."/>
            <person name="Harwood C.S."/>
            <person name="Richardson P."/>
        </authorList>
    </citation>
    <scope>NUCLEOTIDE SEQUENCE [LARGE SCALE GENOMIC DNA]</scope>
    <source>
        <strain>BisB18</strain>
    </source>
</reference>
<organism>
    <name type="scientific">Rhodopseudomonas palustris (strain BisB18)</name>
    <dbReference type="NCBI Taxonomy" id="316056"/>
    <lineage>
        <taxon>Bacteria</taxon>
        <taxon>Pseudomonadati</taxon>
        <taxon>Pseudomonadota</taxon>
        <taxon>Alphaproteobacteria</taxon>
        <taxon>Hyphomicrobiales</taxon>
        <taxon>Nitrobacteraceae</taxon>
        <taxon>Rhodopseudomonas</taxon>
    </lineage>
</organism>
<gene>
    <name evidence="1" type="primary">metK1</name>
    <name type="ordered locus">RPC_1177</name>
</gene>
<proteinExistence type="inferred from homology"/>
<sequence>MREHCVTSESVTEGHPDKVCDQISDGILDACVAQDPASRVAVETLVSGNIAVIAGEITTTAQIDAERTARAVIKAIGYDDPALGFDSDSCFILTNLRTQSPDINLGVSRGDELGAGDQGVFYGYACDETANLMPIPIALAHTLSLRLTMMRRDGTLPWLRPDGKVQVTMRYGRDGRPCGLDSVVVSAQHDEAVDRDTLVRGLVEGVIYPELHDWLQPGTRVLINPTGRFVVGGPAGDTGVTGRKLMVDTYGGCAQHGGGAFSGKDATKVDRTAAYMARYAAKNVVAAGLAGRCQLALAYAIGQIDPEMISVETFGTETVDGDRICAAVREVFPWTVSGMIAALELRQPRFRKTAAYGHFGREDQGFQWEKTDRSGELLALCTR</sequence>
<evidence type="ECO:0000255" key="1">
    <source>
        <dbReference type="HAMAP-Rule" id="MF_00086"/>
    </source>
</evidence>
<accession>Q21A46</accession>